<sequence>METFFTSESVSEGHPDKLCDQISDAVLDACLSQDPHSCVACETFASTSLILIGGEISTRAHINLTQIARDVAADIGYVSADVGLDAASMAVLDMTHHQSPDIAQGVHGAGLKEFAGSQGAGDQGIMFGFACRETPEFMPAPLMCAHAVVRYAATLRHERRVPWLRPDAKSQVTVQYEGHRPVRISAVVFSQQHDPSPSYETIRETLIEEIVRPALAPTGLLDENTRFFINPTGRFVIGGPFGDTGLTGRKIIVDTYGGMGRHGGGSFSGKDASKVDRSAAYMARYIAKNIVAADLAERCEVQLAYAIGVPYPVSLRIETFGTARASESHITHAVKEIFDLTPAGIVRTLDLCAPRYRSTAVYGHFGREQFPWERTDCVCDLQRAVRPFALSGQIKE</sequence>
<evidence type="ECO:0000255" key="1">
    <source>
        <dbReference type="HAMAP-Rule" id="MF_00086"/>
    </source>
</evidence>
<protein>
    <recommendedName>
        <fullName evidence="1">S-adenosylmethionine synthase</fullName>
        <shortName evidence="1">AdoMet synthase</shortName>
        <ecNumber evidence="1">2.5.1.6</ecNumber>
    </recommendedName>
    <alternativeName>
        <fullName evidence="1">MAT</fullName>
    </alternativeName>
    <alternativeName>
        <fullName evidence="1">Methionine adenosyltransferase</fullName>
    </alternativeName>
</protein>
<gene>
    <name evidence="1" type="primary">metK</name>
    <name type="ordered locus">TP_0794</name>
</gene>
<dbReference type="EC" id="2.5.1.6" evidence="1"/>
<dbReference type="EMBL" id="AE000520">
    <property type="protein sequence ID" value="AAC65758.1"/>
    <property type="molecule type" value="Genomic_DNA"/>
</dbReference>
<dbReference type="PIR" id="A71281">
    <property type="entry name" value="A71281"/>
</dbReference>
<dbReference type="RefSeq" id="WP_010882239.1">
    <property type="nucleotide sequence ID" value="NC_021490.2"/>
</dbReference>
<dbReference type="SMR" id="O83772"/>
<dbReference type="IntAct" id="O83772">
    <property type="interactions" value="5"/>
</dbReference>
<dbReference type="STRING" id="243276.TP_0794"/>
<dbReference type="EnsemblBacteria" id="AAC65758">
    <property type="protein sequence ID" value="AAC65758"/>
    <property type="gene ID" value="TP_0794"/>
</dbReference>
<dbReference type="GeneID" id="93876558"/>
<dbReference type="KEGG" id="tpa:TP_0794"/>
<dbReference type="KEGG" id="tpw:TPANIC_0794"/>
<dbReference type="eggNOG" id="COG0192">
    <property type="taxonomic scope" value="Bacteria"/>
</dbReference>
<dbReference type="HOGENOM" id="CLU_041802_1_1_12"/>
<dbReference type="OrthoDB" id="9801686at2"/>
<dbReference type="UniPathway" id="UPA00315">
    <property type="reaction ID" value="UER00080"/>
</dbReference>
<dbReference type="Proteomes" id="UP000000811">
    <property type="component" value="Chromosome"/>
</dbReference>
<dbReference type="GO" id="GO:0005737">
    <property type="term" value="C:cytoplasm"/>
    <property type="evidence" value="ECO:0007669"/>
    <property type="project" value="UniProtKB-SubCell"/>
</dbReference>
<dbReference type="GO" id="GO:0005524">
    <property type="term" value="F:ATP binding"/>
    <property type="evidence" value="ECO:0007669"/>
    <property type="project" value="UniProtKB-UniRule"/>
</dbReference>
<dbReference type="GO" id="GO:0000287">
    <property type="term" value="F:magnesium ion binding"/>
    <property type="evidence" value="ECO:0007669"/>
    <property type="project" value="UniProtKB-UniRule"/>
</dbReference>
<dbReference type="GO" id="GO:0004478">
    <property type="term" value="F:methionine adenosyltransferase activity"/>
    <property type="evidence" value="ECO:0007669"/>
    <property type="project" value="UniProtKB-UniRule"/>
</dbReference>
<dbReference type="GO" id="GO:0006730">
    <property type="term" value="P:one-carbon metabolic process"/>
    <property type="evidence" value="ECO:0007669"/>
    <property type="project" value="UniProtKB-KW"/>
</dbReference>
<dbReference type="GO" id="GO:0006556">
    <property type="term" value="P:S-adenosylmethionine biosynthetic process"/>
    <property type="evidence" value="ECO:0007669"/>
    <property type="project" value="UniProtKB-UniRule"/>
</dbReference>
<dbReference type="CDD" id="cd18079">
    <property type="entry name" value="S-AdoMet_synt"/>
    <property type="match status" value="1"/>
</dbReference>
<dbReference type="FunFam" id="3.30.300.10:FF:000003">
    <property type="entry name" value="S-adenosylmethionine synthase"/>
    <property type="match status" value="1"/>
</dbReference>
<dbReference type="Gene3D" id="3.30.300.10">
    <property type="match status" value="3"/>
</dbReference>
<dbReference type="HAMAP" id="MF_00086">
    <property type="entry name" value="S_AdoMet_synth1"/>
    <property type="match status" value="1"/>
</dbReference>
<dbReference type="InterPro" id="IPR022631">
    <property type="entry name" value="ADOMET_SYNTHASE_CS"/>
</dbReference>
<dbReference type="InterPro" id="IPR022630">
    <property type="entry name" value="S-AdoMet_synt_C"/>
</dbReference>
<dbReference type="InterPro" id="IPR022629">
    <property type="entry name" value="S-AdoMet_synt_central"/>
</dbReference>
<dbReference type="InterPro" id="IPR022628">
    <property type="entry name" value="S-AdoMet_synt_N"/>
</dbReference>
<dbReference type="InterPro" id="IPR002133">
    <property type="entry name" value="S-AdoMet_synthetase"/>
</dbReference>
<dbReference type="InterPro" id="IPR022636">
    <property type="entry name" value="S-AdoMet_synthetase_sfam"/>
</dbReference>
<dbReference type="NCBIfam" id="TIGR01034">
    <property type="entry name" value="metK"/>
    <property type="match status" value="1"/>
</dbReference>
<dbReference type="PANTHER" id="PTHR11964">
    <property type="entry name" value="S-ADENOSYLMETHIONINE SYNTHETASE"/>
    <property type="match status" value="1"/>
</dbReference>
<dbReference type="Pfam" id="PF02773">
    <property type="entry name" value="S-AdoMet_synt_C"/>
    <property type="match status" value="1"/>
</dbReference>
<dbReference type="Pfam" id="PF02772">
    <property type="entry name" value="S-AdoMet_synt_M"/>
    <property type="match status" value="1"/>
</dbReference>
<dbReference type="Pfam" id="PF00438">
    <property type="entry name" value="S-AdoMet_synt_N"/>
    <property type="match status" value="1"/>
</dbReference>
<dbReference type="PIRSF" id="PIRSF000497">
    <property type="entry name" value="MAT"/>
    <property type="match status" value="1"/>
</dbReference>
<dbReference type="SUPFAM" id="SSF55973">
    <property type="entry name" value="S-adenosylmethionine synthetase"/>
    <property type="match status" value="3"/>
</dbReference>
<dbReference type="PROSITE" id="PS00376">
    <property type="entry name" value="ADOMET_SYNTHASE_1"/>
    <property type="match status" value="1"/>
</dbReference>
<dbReference type="PROSITE" id="PS00377">
    <property type="entry name" value="ADOMET_SYNTHASE_2"/>
    <property type="match status" value="1"/>
</dbReference>
<accession>O83772</accession>
<name>METK_TREPA</name>
<proteinExistence type="inferred from homology"/>
<organism>
    <name type="scientific">Treponema pallidum (strain Nichols)</name>
    <dbReference type="NCBI Taxonomy" id="243276"/>
    <lineage>
        <taxon>Bacteria</taxon>
        <taxon>Pseudomonadati</taxon>
        <taxon>Spirochaetota</taxon>
        <taxon>Spirochaetia</taxon>
        <taxon>Spirochaetales</taxon>
        <taxon>Treponemataceae</taxon>
        <taxon>Treponema</taxon>
    </lineage>
</organism>
<comment type="function">
    <text evidence="1">Catalyzes the formation of S-adenosylmethionine (AdoMet) from methionine and ATP. The overall synthetic reaction is composed of two sequential steps, AdoMet formation and the subsequent tripolyphosphate hydrolysis which occurs prior to release of AdoMet from the enzyme.</text>
</comment>
<comment type="catalytic activity">
    <reaction evidence="1">
        <text>L-methionine + ATP + H2O = S-adenosyl-L-methionine + phosphate + diphosphate</text>
        <dbReference type="Rhea" id="RHEA:21080"/>
        <dbReference type="ChEBI" id="CHEBI:15377"/>
        <dbReference type="ChEBI" id="CHEBI:30616"/>
        <dbReference type="ChEBI" id="CHEBI:33019"/>
        <dbReference type="ChEBI" id="CHEBI:43474"/>
        <dbReference type="ChEBI" id="CHEBI:57844"/>
        <dbReference type="ChEBI" id="CHEBI:59789"/>
        <dbReference type="EC" id="2.5.1.6"/>
    </reaction>
</comment>
<comment type="cofactor">
    <cofactor evidence="1">
        <name>Mg(2+)</name>
        <dbReference type="ChEBI" id="CHEBI:18420"/>
    </cofactor>
    <text evidence="1">Binds 2 divalent ions per subunit.</text>
</comment>
<comment type="cofactor">
    <cofactor evidence="1">
        <name>K(+)</name>
        <dbReference type="ChEBI" id="CHEBI:29103"/>
    </cofactor>
    <text evidence="1">Binds 1 potassium ion per subunit.</text>
</comment>
<comment type="pathway">
    <text evidence="1">Amino-acid biosynthesis; S-adenosyl-L-methionine biosynthesis; S-adenosyl-L-methionine from L-methionine: step 1/1.</text>
</comment>
<comment type="subunit">
    <text evidence="1">Homotetramer; dimer of dimers.</text>
</comment>
<comment type="subcellular location">
    <subcellularLocation>
        <location evidence="1">Cytoplasm</location>
    </subcellularLocation>
</comment>
<comment type="similarity">
    <text evidence="1">Belongs to the AdoMet synthase family.</text>
</comment>
<keyword id="KW-0067">ATP-binding</keyword>
<keyword id="KW-0963">Cytoplasm</keyword>
<keyword id="KW-0460">Magnesium</keyword>
<keyword id="KW-0479">Metal-binding</keyword>
<keyword id="KW-0547">Nucleotide-binding</keyword>
<keyword id="KW-0554">One-carbon metabolism</keyword>
<keyword id="KW-0630">Potassium</keyword>
<keyword id="KW-1185">Reference proteome</keyword>
<keyword id="KW-0808">Transferase</keyword>
<feature type="chain" id="PRO_0000174617" description="S-adenosylmethionine synthase">
    <location>
        <begin position="1"/>
        <end position="396"/>
    </location>
</feature>
<feature type="region of interest" description="Flexible loop" evidence="1">
    <location>
        <begin position="98"/>
        <end position="108"/>
    </location>
</feature>
<feature type="binding site" description="in other chain" evidence="1">
    <location>
        <position position="14"/>
    </location>
    <ligand>
        <name>ATP</name>
        <dbReference type="ChEBI" id="CHEBI:30616"/>
        <note>ligand shared between two neighboring subunits</note>
    </ligand>
</feature>
<feature type="binding site" evidence="1">
    <location>
        <position position="16"/>
    </location>
    <ligand>
        <name>Mg(2+)</name>
        <dbReference type="ChEBI" id="CHEBI:18420"/>
    </ligand>
</feature>
<feature type="binding site" evidence="1">
    <location>
        <position position="42"/>
    </location>
    <ligand>
        <name>K(+)</name>
        <dbReference type="ChEBI" id="CHEBI:29103"/>
    </ligand>
</feature>
<feature type="binding site" description="in other chain" evidence="1">
    <location>
        <position position="55"/>
    </location>
    <ligand>
        <name>L-methionine</name>
        <dbReference type="ChEBI" id="CHEBI:57844"/>
        <note>ligand shared between two neighboring subunits</note>
    </ligand>
</feature>
<feature type="binding site" description="in other chain" evidence="1">
    <location>
        <position position="98"/>
    </location>
    <ligand>
        <name>L-methionine</name>
        <dbReference type="ChEBI" id="CHEBI:57844"/>
        <note>ligand shared between two neighboring subunits</note>
    </ligand>
</feature>
<feature type="binding site" description="in other chain" evidence="1">
    <location>
        <begin position="167"/>
        <end position="169"/>
    </location>
    <ligand>
        <name>ATP</name>
        <dbReference type="ChEBI" id="CHEBI:30616"/>
        <note>ligand shared between two neighboring subunits</note>
    </ligand>
</feature>
<feature type="binding site" description="in other chain" evidence="1">
    <location>
        <begin position="234"/>
        <end position="235"/>
    </location>
    <ligand>
        <name>ATP</name>
        <dbReference type="ChEBI" id="CHEBI:30616"/>
        <note>ligand shared between two neighboring subunits</note>
    </ligand>
</feature>
<feature type="binding site" evidence="1">
    <location>
        <position position="243"/>
    </location>
    <ligand>
        <name>ATP</name>
        <dbReference type="ChEBI" id="CHEBI:30616"/>
        <note>ligand shared between two neighboring subunits</note>
    </ligand>
</feature>
<feature type="binding site" evidence="1">
    <location>
        <position position="243"/>
    </location>
    <ligand>
        <name>L-methionine</name>
        <dbReference type="ChEBI" id="CHEBI:57844"/>
        <note>ligand shared between two neighboring subunits</note>
    </ligand>
</feature>
<feature type="binding site" description="in other chain" evidence="1">
    <location>
        <begin position="249"/>
        <end position="250"/>
    </location>
    <ligand>
        <name>ATP</name>
        <dbReference type="ChEBI" id="CHEBI:30616"/>
        <note>ligand shared between two neighboring subunits</note>
    </ligand>
</feature>
<feature type="binding site" evidence="1">
    <location>
        <position position="266"/>
    </location>
    <ligand>
        <name>ATP</name>
        <dbReference type="ChEBI" id="CHEBI:30616"/>
        <note>ligand shared between two neighboring subunits</note>
    </ligand>
</feature>
<feature type="binding site" evidence="1">
    <location>
        <position position="270"/>
    </location>
    <ligand>
        <name>ATP</name>
        <dbReference type="ChEBI" id="CHEBI:30616"/>
        <note>ligand shared between two neighboring subunits</note>
    </ligand>
</feature>
<feature type="binding site" description="in other chain" evidence="1">
    <location>
        <position position="274"/>
    </location>
    <ligand>
        <name>L-methionine</name>
        <dbReference type="ChEBI" id="CHEBI:57844"/>
        <note>ligand shared between two neighboring subunits</note>
    </ligand>
</feature>
<reference key="1">
    <citation type="journal article" date="1998" name="Science">
        <title>Complete genome sequence of Treponema pallidum, the syphilis spirochete.</title>
        <authorList>
            <person name="Fraser C.M."/>
            <person name="Norris S.J."/>
            <person name="Weinstock G.M."/>
            <person name="White O."/>
            <person name="Sutton G.G."/>
            <person name="Dodson R.J."/>
            <person name="Gwinn M.L."/>
            <person name="Hickey E.K."/>
            <person name="Clayton R.A."/>
            <person name="Ketchum K.A."/>
            <person name="Sodergren E."/>
            <person name="Hardham J.M."/>
            <person name="McLeod M.P."/>
            <person name="Salzberg S.L."/>
            <person name="Peterson J.D."/>
            <person name="Khalak H.G."/>
            <person name="Richardson D.L."/>
            <person name="Howell J.K."/>
            <person name="Chidambaram M."/>
            <person name="Utterback T.R."/>
            <person name="McDonald L.A."/>
            <person name="Artiach P."/>
            <person name="Bowman C."/>
            <person name="Cotton M.D."/>
            <person name="Fujii C."/>
            <person name="Garland S.A."/>
            <person name="Hatch B."/>
            <person name="Horst K."/>
            <person name="Roberts K.M."/>
            <person name="Sandusky M."/>
            <person name="Weidman J.F."/>
            <person name="Smith H.O."/>
            <person name="Venter J.C."/>
        </authorList>
    </citation>
    <scope>NUCLEOTIDE SEQUENCE [LARGE SCALE GENOMIC DNA]</scope>
    <source>
        <strain>Nichols</strain>
    </source>
</reference>